<accession>Q2V300</accession>
<keyword id="KW-0929">Antimicrobial</keyword>
<keyword id="KW-1015">Disulfide bond</keyword>
<keyword id="KW-0295">Fungicide</keyword>
<keyword id="KW-0611">Plant defense</keyword>
<keyword id="KW-1185">Reference proteome</keyword>
<keyword id="KW-0964">Secreted</keyword>
<keyword id="KW-0732">Signal</keyword>
<evidence type="ECO:0000250" key="1"/>
<evidence type="ECO:0000255" key="2"/>
<evidence type="ECO:0000305" key="3"/>
<gene>
    <name type="ordered locus">At5g50423</name>
    <name type="ORF">MXI22</name>
</gene>
<protein>
    <recommendedName>
        <fullName>Defensin-like protein 222</fullName>
    </recommendedName>
</protein>
<comment type="subcellular location">
    <subcellularLocation>
        <location evidence="1">Secreted</location>
    </subcellularLocation>
</comment>
<comment type="similarity">
    <text evidence="3">Belongs to the DEFL family.</text>
</comment>
<comment type="caution">
    <text evidence="3">Lacks 1 of the 4 disulfide bonds, which are conserved features of the family.</text>
</comment>
<organism>
    <name type="scientific">Arabidopsis thaliana</name>
    <name type="common">Mouse-ear cress</name>
    <dbReference type="NCBI Taxonomy" id="3702"/>
    <lineage>
        <taxon>Eukaryota</taxon>
        <taxon>Viridiplantae</taxon>
        <taxon>Streptophyta</taxon>
        <taxon>Embryophyta</taxon>
        <taxon>Tracheophyta</taxon>
        <taxon>Spermatophyta</taxon>
        <taxon>Magnoliopsida</taxon>
        <taxon>eudicotyledons</taxon>
        <taxon>Gunneridae</taxon>
        <taxon>Pentapetalae</taxon>
        <taxon>rosids</taxon>
        <taxon>malvids</taxon>
        <taxon>Brassicales</taxon>
        <taxon>Brassicaceae</taxon>
        <taxon>Camelineae</taxon>
        <taxon>Arabidopsis</taxon>
    </lineage>
</organism>
<reference key="1">
    <citation type="journal article" date="1998" name="DNA Res.">
        <title>Structural analysis of Arabidopsis thaliana chromosome 5. VI. Sequence features of the regions of 1,367,185 bp covered by 19 physically assigned P1 and TAC clones.</title>
        <authorList>
            <person name="Kotani H."/>
            <person name="Nakamura Y."/>
            <person name="Sato S."/>
            <person name="Asamizu E."/>
            <person name="Kaneko T."/>
            <person name="Miyajima N."/>
            <person name="Tabata S."/>
        </authorList>
    </citation>
    <scope>NUCLEOTIDE SEQUENCE [LARGE SCALE GENOMIC DNA]</scope>
    <source>
        <strain>cv. Columbia</strain>
    </source>
</reference>
<reference key="2">
    <citation type="journal article" date="2017" name="Plant J.">
        <title>Araport11: a complete reannotation of the Arabidopsis thaliana reference genome.</title>
        <authorList>
            <person name="Cheng C.Y."/>
            <person name="Krishnakumar V."/>
            <person name="Chan A.P."/>
            <person name="Thibaud-Nissen F."/>
            <person name="Schobel S."/>
            <person name="Town C.D."/>
        </authorList>
    </citation>
    <scope>GENOME REANNOTATION</scope>
    <source>
        <strain>cv. Columbia</strain>
    </source>
</reference>
<reference key="3">
    <citation type="journal article" date="2005" name="Plant Physiol.">
        <title>Genome organization of more than 300 defensin-like genes in Arabidopsis.</title>
        <authorList>
            <person name="Silverstein K.A.T."/>
            <person name="Graham M.A."/>
            <person name="Paape T.D."/>
            <person name="VandenBosch K.A."/>
        </authorList>
    </citation>
    <scope>GENE FAMILY</scope>
</reference>
<name>DF222_ARATH</name>
<dbReference type="EMBL" id="AB012248">
    <property type="status" value="NOT_ANNOTATED_CDS"/>
    <property type="molecule type" value="Genomic_DNA"/>
</dbReference>
<dbReference type="EMBL" id="CP002688">
    <property type="protein sequence ID" value="AED95942.1"/>
    <property type="molecule type" value="Genomic_DNA"/>
</dbReference>
<dbReference type="RefSeq" id="NP_001032047.1">
    <property type="nucleotide sequence ID" value="NM_001036970.2"/>
</dbReference>
<dbReference type="SMR" id="Q2V300"/>
<dbReference type="STRING" id="3702.Q2V300"/>
<dbReference type="PaxDb" id="3702-AT5G50423.1"/>
<dbReference type="ProteomicsDB" id="224089"/>
<dbReference type="EnsemblPlants" id="AT5G50423.1">
    <property type="protein sequence ID" value="AT5G50423.1"/>
    <property type="gene ID" value="AT5G50423"/>
</dbReference>
<dbReference type="GeneID" id="3771480"/>
<dbReference type="Gramene" id="AT5G50423.1">
    <property type="protein sequence ID" value="AT5G50423.1"/>
    <property type="gene ID" value="AT5G50423"/>
</dbReference>
<dbReference type="KEGG" id="ath:AT5G50423"/>
<dbReference type="Araport" id="AT5G50423"/>
<dbReference type="TAIR" id="AT5G50423"/>
<dbReference type="HOGENOM" id="CLU_180309_0_0_1"/>
<dbReference type="InParanoid" id="Q2V300"/>
<dbReference type="OMA" id="CSRITIG"/>
<dbReference type="OrthoDB" id="1024024at2759"/>
<dbReference type="PhylomeDB" id="Q2V300"/>
<dbReference type="PRO" id="PR:Q2V300"/>
<dbReference type="Proteomes" id="UP000006548">
    <property type="component" value="Chromosome 5"/>
</dbReference>
<dbReference type="ExpressionAtlas" id="Q2V300">
    <property type="expression patterns" value="baseline"/>
</dbReference>
<dbReference type="GO" id="GO:0005576">
    <property type="term" value="C:extracellular region"/>
    <property type="evidence" value="ECO:0007669"/>
    <property type="project" value="UniProtKB-SubCell"/>
</dbReference>
<dbReference type="GO" id="GO:0050832">
    <property type="term" value="P:defense response to fungus"/>
    <property type="evidence" value="ECO:0007669"/>
    <property type="project" value="UniProtKB-KW"/>
</dbReference>
<dbReference type="GO" id="GO:0031640">
    <property type="term" value="P:killing of cells of another organism"/>
    <property type="evidence" value="ECO:0007669"/>
    <property type="project" value="UniProtKB-KW"/>
</dbReference>
<sequence length="101" mass="11374">MRTIVLFSTLMILVLSCMSNATVKSYSEEKTHSFDLTANPPIDLNIVDELPRDEHLGVSHADNVIGFCQECAHHCLQRKRVLGECRWFTCHCSRITIGVGL</sequence>
<proteinExistence type="evidence at transcript level"/>
<feature type="signal peptide" evidence="2">
    <location>
        <begin position="1"/>
        <end position="21"/>
    </location>
</feature>
<feature type="chain" id="PRO_0000379714" description="Defensin-like protein 222">
    <location>
        <begin position="22"/>
        <end position="101"/>
    </location>
</feature>
<feature type="disulfide bond" evidence="1">
    <location>
        <begin position="68"/>
        <end position="85"/>
    </location>
</feature>
<feature type="disulfide bond" evidence="1">
    <location>
        <begin position="71"/>
        <end position="90"/>
    </location>
</feature>
<feature type="disulfide bond" evidence="1">
    <location>
        <begin position="75"/>
        <end position="92"/>
    </location>
</feature>